<proteinExistence type="evidence at transcript level"/>
<name>TPPC4_BOVIN</name>
<organism>
    <name type="scientific">Bos taurus</name>
    <name type="common">Bovine</name>
    <dbReference type="NCBI Taxonomy" id="9913"/>
    <lineage>
        <taxon>Eukaryota</taxon>
        <taxon>Metazoa</taxon>
        <taxon>Chordata</taxon>
        <taxon>Craniata</taxon>
        <taxon>Vertebrata</taxon>
        <taxon>Euteleostomi</taxon>
        <taxon>Mammalia</taxon>
        <taxon>Eutheria</taxon>
        <taxon>Laurasiatheria</taxon>
        <taxon>Artiodactyla</taxon>
        <taxon>Ruminantia</taxon>
        <taxon>Pecora</taxon>
        <taxon>Bovidae</taxon>
        <taxon>Bovinae</taxon>
        <taxon>Bos</taxon>
    </lineage>
</organism>
<comment type="function">
    <text evidence="1 2">Core component of the TRAPP complexes which has a function of guanine nucleotide exchange factor activity for Rab1 GTPase. Plays a role in vesicular transport from endoplasmic reticulum to Golgi and autophagy (By similarity). May play a role in dendrite postsynaptic membrane trafficking (By similarity).</text>
</comment>
<comment type="subunit">
    <text evidence="1 2">Component of the multisubunit TRAPP (transport protein particle) complex, which includes at least TRAPPC2, TRAPPC2L, TRAPPC3, TRAPPC3L, TRAPPC4, TRAPPC5, TRAPPC8, TRAPPC9, TRAPPC10, TRAPPC11 and TRAPPC12 (By similarity). Interacts with SDC2 (By similarity).</text>
</comment>
<comment type="subcellular location">
    <subcellularLocation>
        <location evidence="1">Postsynaptic cell membrane</location>
    </subcellularLocation>
    <subcellularLocation>
        <location evidence="1">Golgi apparatus membrane</location>
    </subcellularLocation>
    <subcellularLocation>
        <location evidence="1">Endoplasmic reticulum</location>
    </subcellularLocation>
    <subcellularLocation>
        <location evidence="1">Vesicle</location>
    </subcellularLocation>
    <text evidence="1">Associated with postsynaptic membranes and in intracellular cisterns and vesicles (Golgi).</text>
</comment>
<comment type="similarity">
    <text evidence="3">Belongs to the TRAPP small subunits family. TRAPPC4 subfamily.</text>
</comment>
<accession>Q2TBL9</accession>
<keyword id="KW-1003">Cell membrane</keyword>
<keyword id="KW-0256">Endoplasmic reticulum</keyword>
<keyword id="KW-0931">ER-Golgi transport</keyword>
<keyword id="KW-0333">Golgi apparatus</keyword>
<keyword id="KW-0472">Membrane</keyword>
<keyword id="KW-0628">Postsynaptic cell membrane</keyword>
<keyword id="KW-1185">Reference proteome</keyword>
<keyword id="KW-0770">Synapse</keyword>
<keyword id="KW-0813">Transport</keyword>
<dbReference type="EMBL" id="BC109939">
    <property type="protein sequence ID" value="AAI09940.1"/>
    <property type="molecule type" value="mRNA"/>
</dbReference>
<dbReference type="RefSeq" id="NP_001033591.1">
    <property type="nucleotide sequence ID" value="NM_001038502.2"/>
</dbReference>
<dbReference type="RefSeq" id="NP_001178133.1">
    <property type="nucleotide sequence ID" value="NM_001191204.1"/>
</dbReference>
<dbReference type="SMR" id="Q2TBL9"/>
<dbReference type="FunCoup" id="Q2TBL9">
    <property type="interactions" value="2411"/>
</dbReference>
<dbReference type="STRING" id="9913.ENSBTAP00000010619"/>
<dbReference type="PaxDb" id="9913-ENSBTAP00000010619"/>
<dbReference type="Ensembl" id="ENSBTAT00000010619.5">
    <property type="protein sequence ID" value="ENSBTAP00000010619.4"/>
    <property type="gene ID" value="ENSBTAG00000008075.6"/>
</dbReference>
<dbReference type="GeneID" id="785345"/>
<dbReference type="KEGG" id="bta:785345"/>
<dbReference type="CTD" id="51399"/>
<dbReference type="VEuPathDB" id="HostDB:ENSBTAG00000008075"/>
<dbReference type="VGNC" id="VGNC:36290">
    <property type="gene designation" value="TRAPPC4"/>
</dbReference>
<dbReference type="eggNOG" id="KOG3369">
    <property type="taxonomic scope" value="Eukaryota"/>
</dbReference>
<dbReference type="GeneTree" id="ENSGT00940000153761"/>
<dbReference type="HOGENOM" id="CLU_053380_1_0_1"/>
<dbReference type="InParanoid" id="Q2TBL9"/>
<dbReference type="OMA" id="GQRDGIN"/>
<dbReference type="OrthoDB" id="246406at2759"/>
<dbReference type="TreeFam" id="TF314561"/>
<dbReference type="Reactome" id="R-BTA-204005">
    <property type="pathway name" value="COPII-mediated vesicle transport"/>
</dbReference>
<dbReference type="Reactome" id="R-BTA-8876198">
    <property type="pathway name" value="RAB GEFs exchange GTP for GDP on RABs"/>
</dbReference>
<dbReference type="Proteomes" id="UP000009136">
    <property type="component" value="Chromosome 15"/>
</dbReference>
<dbReference type="Bgee" id="ENSBTAG00000008075">
    <property type="expression patterns" value="Expressed in pituitary gland and 107 other cell types or tissues"/>
</dbReference>
<dbReference type="GO" id="GO:0030425">
    <property type="term" value="C:dendrite"/>
    <property type="evidence" value="ECO:0007669"/>
    <property type="project" value="Ensembl"/>
</dbReference>
<dbReference type="GO" id="GO:0005783">
    <property type="term" value="C:endoplasmic reticulum"/>
    <property type="evidence" value="ECO:0007669"/>
    <property type="project" value="UniProtKB-SubCell"/>
</dbReference>
<dbReference type="GO" id="GO:0000139">
    <property type="term" value="C:Golgi membrane"/>
    <property type="evidence" value="ECO:0007669"/>
    <property type="project" value="UniProtKB-SubCell"/>
</dbReference>
<dbReference type="GO" id="GO:0005795">
    <property type="term" value="C:Golgi stack"/>
    <property type="evidence" value="ECO:0007669"/>
    <property type="project" value="Ensembl"/>
</dbReference>
<dbReference type="GO" id="GO:0098839">
    <property type="term" value="C:postsynaptic density membrane"/>
    <property type="evidence" value="ECO:0007669"/>
    <property type="project" value="Ensembl"/>
</dbReference>
<dbReference type="GO" id="GO:0048786">
    <property type="term" value="C:presynaptic active zone"/>
    <property type="evidence" value="ECO:0007669"/>
    <property type="project" value="Ensembl"/>
</dbReference>
<dbReference type="GO" id="GO:0008021">
    <property type="term" value="C:synaptic vesicle"/>
    <property type="evidence" value="ECO:0007669"/>
    <property type="project" value="Ensembl"/>
</dbReference>
<dbReference type="GO" id="GO:0030008">
    <property type="term" value="C:TRAPP complex"/>
    <property type="evidence" value="ECO:0000250"/>
    <property type="project" value="UniProtKB"/>
</dbReference>
<dbReference type="GO" id="GO:0006914">
    <property type="term" value="P:autophagy"/>
    <property type="evidence" value="ECO:0000250"/>
    <property type="project" value="UniProtKB"/>
</dbReference>
<dbReference type="GO" id="GO:0016358">
    <property type="term" value="P:dendrite development"/>
    <property type="evidence" value="ECO:0007669"/>
    <property type="project" value="Ensembl"/>
</dbReference>
<dbReference type="GO" id="GO:0006888">
    <property type="term" value="P:endoplasmic reticulum to Golgi vesicle-mediated transport"/>
    <property type="evidence" value="ECO:0000250"/>
    <property type="project" value="UniProtKB"/>
</dbReference>
<dbReference type="CDD" id="cd14856">
    <property type="entry name" value="TRAPPC4_synbindin"/>
    <property type="match status" value="1"/>
</dbReference>
<dbReference type="FunFam" id="3.30.450.70:FF:000002">
    <property type="entry name" value="Trafficking protein particle complex subunit 4"/>
    <property type="match status" value="1"/>
</dbReference>
<dbReference type="Gene3D" id="3.30.450.70">
    <property type="match status" value="1"/>
</dbReference>
<dbReference type="InterPro" id="IPR011012">
    <property type="entry name" value="Longin-like_dom_sf"/>
</dbReference>
<dbReference type="InterPro" id="IPR007233">
    <property type="entry name" value="TRAPPC"/>
</dbReference>
<dbReference type="PANTHER" id="PTHR23249">
    <property type="entry name" value="TRAFFICKING PROTEIN PARTICLE COMPLEX SUBUNIT"/>
    <property type="match status" value="1"/>
</dbReference>
<dbReference type="PANTHER" id="PTHR23249:SF15">
    <property type="entry name" value="TRAFFICKING PROTEIN PARTICLE COMPLEX SUBUNIT 4"/>
    <property type="match status" value="1"/>
</dbReference>
<dbReference type="Pfam" id="PF04099">
    <property type="entry name" value="Sybindin"/>
    <property type="match status" value="1"/>
</dbReference>
<dbReference type="SMART" id="SM01399">
    <property type="entry name" value="Sybindin"/>
    <property type="match status" value="1"/>
</dbReference>
<dbReference type="SUPFAM" id="SSF64356">
    <property type="entry name" value="SNARE-like"/>
    <property type="match status" value="1"/>
</dbReference>
<evidence type="ECO:0000250" key="1">
    <source>
        <dbReference type="UniProtKB" id="Q9ES56"/>
    </source>
</evidence>
<evidence type="ECO:0000250" key="2">
    <source>
        <dbReference type="UniProtKB" id="Q9Y296"/>
    </source>
</evidence>
<evidence type="ECO:0000305" key="3"/>
<protein>
    <recommendedName>
        <fullName>Trafficking protein particle complex subunit 4</fullName>
    </recommendedName>
</protein>
<gene>
    <name type="primary">TRAPPC4</name>
</gene>
<sequence>MAIFSVYVVNKAGGLIYQLDSYAPRAEAEKTFSYPLDLLLKLHDERVLVAFGQRDGIRVGHAVLAINGVDVNGKYTADGKEVLEYLGNPANYPVSIRFGRPRLTSNEKLMLASMFHSLFAIGSQLSPEQGSSGIEMLETDTFKLHCFQTLTGIKFVVLADPRQAGIDSLLRKIYEIYSDFALKNPFYSLEMPIRCELFDQNLKLALEVAEKAGTFGPGS</sequence>
<feature type="chain" id="PRO_0000260210" description="Trafficking protein particle complex subunit 4">
    <location>
        <begin position="1"/>
        <end position="219"/>
    </location>
</feature>
<reference key="1">
    <citation type="submission" date="2005-11" db="EMBL/GenBank/DDBJ databases">
        <authorList>
            <consortium name="NIH - Mammalian Gene Collection (MGC) project"/>
        </authorList>
    </citation>
    <scope>NUCLEOTIDE SEQUENCE [LARGE SCALE MRNA]</scope>
    <source>
        <strain>Crossbred X Angus</strain>
        <tissue>Liver</tissue>
    </source>
</reference>